<gene>
    <name type="primary">cpeB</name>
</gene>
<comment type="function">
    <text evidence="1">Light-harvesting photosynthetic bile pigment-protein from the phycobiliprotein complex.</text>
</comment>
<comment type="subunit">
    <text evidence="1">Heterodimer of an alpha and a beta chain.</text>
</comment>
<comment type="subcellular location">
    <subcellularLocation>
        <location evidence="1">Plastid</location>
        <location evidence="1">Chloroplast thylakoid membrane</location>
        <topology evidence="1">Peripheral membrane protein</topology>
        <orientation evidence="1">Stromal side</orientation>
    </subcellularLocation>
    <text evidence="1">Forms the periphery of the phycobilisome rod.</text>
</comment>
<comment type="PTM">
    <text evidence="1">Contains two covalently linked phycoerythrobilin chromophores and one covalently linked phycourobilin chromophore.</text>
</comment>
<comment type="similarity">
    <text evidence="2">Belongs to the phycobiliprotein family.</text>
</comment>
<dbReference type="EMBL" id="D89878">
    <property type="protein sequence ID" value="BAA21737.1"/>
    <property type="molecule type" value="Genomic_DNA"/>
</dbReference>
<dbReference type="EMBL" id="DQ666487">
    <property type="protein sequence ID" value="ABG01963.1"/>
    <property type="molecule type" value="Genomic_DNA"/>
</dbReference>
<dbReference type="EMBL" id="AP006715">
    <property type="protein sequence ID" value="BAE92491.1"/>
    <property type="molecule type" value="Genomic_DNA"/>
</dbReference>
<dbReference type="RefSeq" id="YP_537048.1">
    <property type="nucleotide sequence ID" value="NC_007932.1"/>
</dbReference>
<dbReference type="SMR" id="P68940"/>
<dbReference type="GeneID" id="3978881"/>
<dbReference type="GO" id="GO:0009535">
    <property type="term" value="C:chloroplast thylakoid membrane"/>
    <property type="evidence" value="ECO:0007669"/>
    <property type="project" value="UniProtKB-SubCell"/>
</dbReference>
<dbReference type="GO" id="GO:0030089">
    <property type="term" value="C:phycobilisome"/>
    <property type="evidence" value="ECO:0007669"/>
    <property type="project" value="UniProtKB-KW"/>
</dbReference>
<dbReference type="GO" id="GO:0015979">
    <property type="term" value="P:photosynthesis"/>
    <property type="evidence" value="ECO:0007669"/>
    <property type="project" value="UniProtKB-KW"/>
</dbReference>
<dbReference type="CDD" id="cd14767">
    <property type="entry name" value="PE_beta-like"/>
    <property type="match status" value="1"/>
</dbReference>
<dbReference type="Gene3D" id="1.10.490.20">
    <property type="entry name" value="Phycocyanins"/>
    <property type="match status" value="1"/>
</dbReference>
<dbReference type="InterPro" id="IPR009050">
    <property type="entry name" value="Globin-like_sf"/>
</dbReference>
<dbReference type="InterPro" id="IPR012128">
    <property type="entry name" value="Phycobilisome_asu/bsu"/>
</dbReference>
<dbReference type="InterPro" id="IPR038719">
    <property type="entry name" value="Phycobilisome_asu/bsu_sf"/>
</dbReference>
<dbReference type="PANTHER" id="PTHR34011:SF7">
    <property type="entry name" value="C-PHYCOCYANIN BETA SUBUNIT"/>
    <property type="match status" value="1"/>
</dbReference>
<dbReference type="PANTHER" id="PTHR34011">
    <property type="entry name" value="PHYCOBILISOME 32.1 KDA LINKER POLYPEPTIDE, PHYCOCYANIN-ASSOCIATED, ROD 2-RELATED"/>
    <property type="match status" value="1"/>
</dbReference>
<dbReference type="Pfam" id="PF00502">
    <property type="entry name" value="Phycobilisome"/>
    <property type="match status" value="1"/>
</dbReference>
<dbReference type="PIRSF" id="PIRSF000081">
    <property type="entry name" value="Phycocyanin"/>
    <property type="match status" value="1"/>
</dbReference>
<dbReference type="SUPFAM" id="SSF46458">
    <property type="entry name" value="Globin-like"/>
    <property type="match status" value="1"/>
</dbReference>
<feature type="chain" id="PRO_0000199198" description="R-phycoerythrin beta chain">
    <location>
        <begin position="1"/>
        <end position="177"/>
    </location>
</feature>
<feature type="binding site" description="covalent" evidence="1">
    <location>
        <position position="50"/>
    </location>
    <ligand>
        <name>phycourobilin</name>
        <dbReference type="ChEBI" id="CHEBI:189062"/>
    </ligand>
</feature>
<feature type="binding site" description="covalent" evidence="1">
    <location>
        <position position="61"/>
    </location>
    <ligand>
        <name>phycourobilin</name>
        <dbReference type="ChEBI" id="CHEBI:189062"/>
    </ligand>
</feature>
<feature type="binding site" description="covalent" evidence="1">
    <location>
        <position position="82"/>
    </location>
    <ligand>
        <name>(2R,3E)-phycoerythrobilin</name>
        <dbReference type="ChEBI" id="CHEBI:85276"/>
        <label>1</label>
    </ligand>
</feature>
<feature type="binding site" description="covalent" evidence="1">
    <location>
        <position position="158"/>
    </location>
    <ligand>
        <name>(2R,3E)-phycoerythrobilin</name>
        <dbReference type="ChEBI" id="CHEBI:85276"/>
        <label>2</label>
    </ligand>
</feature>
<feature type="modified residue" description="N4-methylasparagine" evidence="1">
    <location>
        <position position="72"/>
    </location>
</feature>
<feature type="sequence variant" description="In strain: NBD and Qingdao.">
    <original>G</original>
    <variation>D</variation>
    <location>
        <position position="33"/>
    </location>
</feature>
<geneLocation type="chloroplast"/>
<keyword id="KW-0042">Antenna complex</keyword>
<keyword id="KW-0089">Bile pigment</keyword>
<keyword id="KW-0150">Chloroplast</keyword>
<keyword id="KW-0157">Chromophore</keyword>
<keyword id="KW-0249">Electron transport</keyword>
<keyword id="KW-0472">Membrane</keyword>
<keyword id="KW-0488">Methylation</keyword>
<keyword id="KW-0602">Photosynthesis</keyword>
<keyword id="KW-0605">Phycobilisome</keyword>
<keyword id="KW-0934">Plastid</keyword>
<keyword id="KW-0793">Thylakoid</keyword>
<keyword id="KW-0813">Transport</keyword>
<organism>
    <name type="scientific">Pyropia yezoensis</name>
    <name type="common">Susabi-nori</name>
    <name type="synonym">Porphyra yezoensis</name>
    <dbReference type="NCBI Taxonomy" id="2788"/>
    <lineage>
        <taxon>Eukaryota</taxon>
        <taxon>Rhodophyta</taxon>
        <taxon>Bangiophyceae</taxon>
        <taxon>Bangiales</taxon>
        <taxon>Bangiaceae</taxon>
        <taxon>Pyropia</taxon>
    </lineage>
</organism>
<proteinExistence type="inferred from homology"/>
<reference key="1">
    <citation type="online journal article" date="1997" name="Plant Gene Register">
        <title>Phycoerythrin encoding gene from Porphyra yezoensis.</title>
        <authorList>
            <person name="Kim B.-K."/>
            <person name="Fujita Y."/>
        </authorList>
        <locator>PGR97-041</locator>
    </citation>
    <scope>NUCLEOTIDE SEQUENCE [GENOMIC DNA]</scope>
    <source>
        <strain>NBD</strain>
    </source>
</reference>
<reference key="2">
    <citation type="submission" date="2006-06" db="EMBL/GenBank/DDBJ databases">
        <title>Phycoerythrin-encoding gene from Porphyra yezoensis isolate Qingdao.</title>
        <authorList>
            <person name="Wang M.Q."/>
            <person name="Mao Y.X."/>
        </authorList>
    </citation>
    <scope>NUCLEOTIDE SEQUENCE [GENOMIC DNA]</scope>
    <source>
        <strain>Qingdao</strain>
    </source>
</reference>
<reference key="3">
    <citation type="submission" date="2003-11" db="EMBL/GenBank/DDBJ databases">
        <title>Whole genome sequence of Porphyra yezoensis chloroplast.</title>
        <authorList>
            <person name="Kunimoto M."/>
            <person name="Morishima K."/>
            <person name="Yoshikawa M."/>
            <person name="Fukuda S."/>
            <person name="Kobayashi T."/>
            <person name="Kobayashi M."/>
            <person name="Okazaki T."/>
            <person name="Ohara I."/>
            <person name="Nakayama I."/>
        </authorList>
    </citation>
    <scope>NUCLEOTIDE SEQUENCE [LARGE SCALE GENOMIC DNA]</scope>
    <source>
        <strain>U-51</strain>
    </source>
</reference>
<evidence type="ECO:0000250" key="1"/>
<evidence type="ECO:0000305" key="2"/>
<protein>
    <recommendedName>
        <fullName>R-phycoerythrin beta chain</fullName>
    </recommendedName>
</protein>
<sequence>MLDAFSRVVVNSDAKAAYVGGSDLQALKKFIAGGNKRLDSVNAIVSNASCIVSDAVSGMICENPGLIAPGGNCYTNRRMAACLRDGEIILRYVSYALLAGDPSVLEDRCLNGLKETYIALGVPTNSSVRAVSIMKAAAVAFITNTASQRKMATADGDCSALASEVASYCDRVAAAIS</sequence>
<name>PHEB_PYRYE</name>
<accession>P68940</accession>
<accession>O20205</accession>
<accession>O49842</accession>
<accession>Q194V4</accession>
<accession>Q1XDC0</accession>